<gene>
    <name type="primary">Dpy19l3</name>
</gene>
<sequence length="716" mass="82990">MMYIRQRKETKPIEVSEDFPSPKEDVKLEKKLPSGCASGRFWKILSSAVGGTVALCIGLLTSVYLATLHENDLWFSNIKEVEREISFRTECGLYYSYYKQMLQAPTLLQGFHGLIYDNKTESMRTINLLQRMNIYQEVFLSVLYRVLPIQKYLEPVYFYIYTLFGLQAVYVTALYITSWLLSGTWLSGLLAALWYVTNRIDTTRVEFTIPLRENWALPFFAIQIAAITYFLRPNLQPLSERLTLLAIFVSTFLFSLTWQFNQFMMLLQALVLFILDSLDMLPAMKATWLYGIQISCLLLVCTLQFFNSMILGSLLISFNLSVLIVRKLQKNLKTGSFLTRIWKLLLHLLLVFCLTLFLNNIIKKVLNLKSDEHIFKFLKAKFGFGATRDFDANLYLCEEAFGLLPLNTFQRLSETLLFYAYMFVLVVTVVTASVVAFHNLSDSTSLKSMDQTRKRAVDLKPEAAYNLIHTILFGVLALSTMRMKYLWTSHMCVFASFGLCSSEVWELLLRLVHLCNPKRIWVLRYLVPVLTLLYLCYKSWPGVMDELSELKEFYDPDTVELMTWINSNTPRKAVFAGSMQLLAGVKLCTGRTLTNHPHYEDKSLRERTQAVYQIYAKRSPEEVHALLRSFGTDFVILEDSICYERRHHRGCRLRDLLDVANGHEMDGPGESDPDLRPADHPRFCEEIKRNLPSYAAHFTRVFQNKTFHVYKLSRNK</sequence>
<reference key="1">
    <citation type="submission" date="2002-08" db="EMBL/GenBank/DDBJ databases">
        <authorList>
            <person name="Ding P."/>
            <person name="Han W."/>
            <person name="Rui M."/>
            <person name="Wang Y."/>
            <person name="Song Q."/>
            <person name="Zhang Y."/>
            <person name="Ma D."/>
        </authorList>
    </citation>
    <scope>NUCLEOTIDE SEQUENCE [MRNA]</scope>
    <source>
        <tissue>Heart</tissue>
    </source>
</reference>
<reference key="2">
    <citation type="journal article" date="2005" name="Science">
        <title>The transcriptional landscape of the mammalian genome.</title>
        <authorList>
            <person name="Carninci P."/>
            <person name="Kasukawa T."/>
            <person name="Katayama S."/>
            <person name="Gough J."/>
            <person name="Frith M.C."/>
            <person name="Maeda N."/>
            <person name="Oyama R."/>
            <person name="Ravasi T."/>
            <person name="Lenhard B."/>
            <person name="Wells C."/>
            <person name="Kodzius R."/>
            <person name="Shimokawa K."/>
            <person name="Bajic V.B."/>
            <person name="Brenner S.E."/>
            <person name="Batalov S."/>
            <person name="Forrest A.R."/>
            <person name="Zavolan M."/>
            <person name="Davis M.J."/>
            <person name="Wilming L.G."/>
            <person name="Aidinis V."/>
            <person name="Allen J.E."/>
            <person name="Ambesi-Impiombato A."/>
            <person name="Apweiler R."/>
            <person name="Aturaliya R.N."/>
            <person name="Bailey T.L."/>
            <person name="Bansal M."/>
            <person name="Baxter L."/>
            <person name="Beisel K.W."/>
            <person name="Bersano T."/>
            <person name="Bono H."/>
            <person name="Chalk A.M."/>
            <person name="Chiu K.P."/>
            <person name="Choudhary V."/>
            <person name="Christoffels A."/>
            <person name="Clutterbuck D.R."/>
            <person name="Crowe M.L."/>
            <person name="Dalla E."/>
            <person name="Dalrymple B.P."/>
            <person name="de Bono B."/>
            <person name="Della Gatta G."/>
            <person name="di Bernardo D."/>
            <person name="Down T."/>
            <person name="Engstrom P."/>
            <person name="Fagiolini M."/>
            <person name="Faulkner G."/>
            <person name="Fletcher C.F."/>
            <person name="Fukushima T."/>
            <person name="Furuno M."/>
            <person name="Futaki S."/>
            <person name="Gariboldi M."/>
            <person name="Georgii-Hemming P."/>
            <person name="Gingeras T.R."/>
            <person name="Gojobori T."/>
            <person name="Green R.E."/>
            <person name="Gustincich S."/>
            <person name="Harbers M."/>
            <person name="Hayashi Y."/>
            <person name="Hensch T.K."/>
            <person name="Hirokawa N."/>
            <person name="Hill D."/>
            <person name="Huminiecki L."/>
            <person name="Iacono M."/>
            <person name="Ikeo K."/>
            <person name="Iwama A."/>
            <person name="Ishikawa T."/>
            <person name="Jakt M."/>
            <person name="Kanapin A."/>
            <person name="Katoh M."/>
            <person name="Kawasawa Y."/>
            <person name="Kelso J."/>
            <person name="Kitamura H."/>
            <person name="Kitano H."/>
            <person name="Kollias G."/>
            <person name="Krishnan S.P."/>
            <person name="Kruger A."/>
            <person name="Kummerfeld S.K."/>
            <person name="Kurochkin I.V."/>
            <person name="Lareau L.F."/>
            <person name="Lazarevic D."/>
            <person name="Lipovich L."/>
            <person name="Liu J."/>
            <person name="Liuni S."/>
            <person name="McWilliam S."/>
            <person name="Madan Babu M."/>
            <person name="Madera M."/>
            <person name="Marchionni L."/>
            <person name="Matsuda H."/>
            <person name="Matsuzawa S."/>
            <person name="Miki H."/>
            <person name="Mignone F."/>
            <person name="Miyake S."/>
            <person name="Morris K."/>
            <person name="Mottagui-Tabar S."/>
            <person name="Mulder N."/>
            <person name="Nakano N."/>
            <person name="Nakauchi H."/>
            <person name="Ng P."/>
            <person name="Nilsson R."/>
            <person name="Nishiguchi S."/>
            <person name="Nishikawa S."/>
            <person name="Nori F."/>
            <person name="Ohara O."/>
            <person name="Okazaki Y."/>
            <person name="Orlando V."/>
            <person name="Pang K.C."/>
            <person name="Pavan W.J."/>
            <person name="Pavesi G."/>
            <person name="Pesole G."/>
            <person name="Petrovsky N."/>
            <person name="Piazza S."/>
            <person name="Reed J."/>
            <person name="Reid J.F."/>
            <person name="Ring B.Z."/>
            <person name="Ringwald M."/>
            <person name="Rost B."/>
            <person name="Ruan Y."/>
            <person name="Salzberg S.L."/>
            <person name="Sandelin A."/>
            <person name="Schneider C."/>
            <person name="Schoenbach C."/>
            <person name="Sekiguchi K."/>
            <person name="Semple C.A."/>
            <person name="Seno S."/>
            <person name="Sessa L."/>
            <person name="Sheng Y."/>
            <person name="Shibata Y."/>
            <person name="Shimada H."/>
            <person name="Shimada K."/>
            <person name="Silva D."/>
            <person name="Sinclair B."/>
            <person name="Sperling S."/>
            <person name="Stupka E."/>
            <person name="Sugiura K."/>
            <person name="Sultana R."/>
            <person name="Takenaka Y."/>
            <person name="Taki K."/>
            <person name="Tammoja K."/>
            <person name="Tan S.L."/>
            <person name="Tang S."/>
            <person name="Taylor M.S."/>
            <person name="Tegner J."/>
            <person name="Teichmann S.A."/>
            <person name="Ueda H.R."/>
            <person name="van Nimwegen E."/>
            <person name="Verardo R."/>
            <person name="Wei C.L."/>
            <person name="Yagi K."/>
            <person name="Yamanishi H."/>
            <person name="Zabarovsky E."/>
            <person name="Zhu S."/>
            <person name="Zimmer A."/>
            <person name="Hide W."/>
            <person name="Bult C."/>
            <person name="Grimmond S.M."/>
            <person name="Teasdale R.D."/>
            <person name="Liu E.T."/>
            <person name="Brusic V."/>
            <person name="Quackenbush J."/>
            <person name="Wahlestedt C."/>
            <person name="Mattick J.S."/>
            <person name="Hume D.A."/>
            <person name="Kai C."/>
            <person name="Sasaki D."/>
            <person name="Tomaru Y."/>
            <person name="Fukuda S."/>
            <person name="Kanamori-Katayama M."/>
            <person name="Suzuki M."/>
            <person name="Aoki J."/>
            <person name="Arakawa T."/>
            <person name="Iida J."/>
            <person name="Imamura K."/>
            <person name="Itoh M."/>
            <person name="Kato T."/>
            <person name="Kawaji H."/>
            <person name="Kawagashira N."/>
            <person name="Kawashima T."/>
            <person name="Kojima M."/>
            <person name="Kondo S."/>
            <person name="Konno H."/>
            <person name="Nakano K."/>
            <person name="Ninomiya N."/>
            <person name="Nishio T."/>
            <person name="Okada M."/>
            <person name="Plessy C."/>
            <person name="Shibata K."/>
            <person name="Shiraki T."/>
            <person name="Suzuki S."/>
            <person name="Tagami M."/>
            <person name="Waki K."/>
            <person name="Watahiki A."/>
            <person name="Okamura-Oho Y."/>
            <person name="Suzuki H."/>
            <person name="Kawai J."/>
            <person name="Hayashizaki Y."/>
        </authorList>
    </citation>
    <scope>NUCLEOTIDE SEQUENCE [LARGE SCALE MRNA]</scope>
    <source>
        <strain>C57BL/6J</strain>
        <tissue>Corpora quadrigemina</tissue>
        <tissue>Diencephalon</tissue>
        <tissue>Lung</tissue>
    </source>
</reference>
<reference key="3">
    <citation type="journal article" date="2004" name="Genome Res.">
        <title>The status, quality, and expansion of the NIH full-length cDNA project: the Mammalian Gene Collection (MGC).</title>
        <authorList>
            <consortium name="The MGC Project Team"/>
        </authorList>
    </citation>
    <scope>NUCLEOTIDE SEQUENCE [LARGE SCALE MRNA]</scope>
    <source>
        <strain>C57BL/6J</strain>
        <tissue>Brain</tissue>
        <tissue>Embryo</tissue>
    </source>
</reference>
<reference key="4">
    <citation type="journal article" date="2017" name="Proc. Natl. Acad. Sci. U.S.A.">
        <title>Distinct C-mannosylation of netrin receptor thrombospondin type 1 repeats by mammalian DPY19L1 and DPY19L3.</title>
        <authorList>
            <person name="Shcherbakova A."/>
            <person name="Tiemann B."/>
            <person name="Buettner F.F."/>
            <person name="Bakker H."/>
        </authorList>
    </citation>
    <scope>SUBCELLULAR LOCATION</scope>
    <scope>FUNCTION</scope>
    <scope>CATALYTIC ACTIVITY</scope>
</reference>
<keyword id="KW-0256">Endoplasmic reticulum</keyword>
<keyword id="KW-0325">Glycoprotein</keyword>
<keyword id="KW-0328">Glycosyltransferase</keyword>
<keyword id="KW-0472">Membrane</keyword>
<keyword id="KW-1185">Reference proteome</keyword>
<keyword id="KW-0808">Transferase</keyword>
<keyword id="KW-0812">Transmembrane</keyword>
<keyword id="KW-1133">Transmembrane helix</keyword>
<protein>
    <recommendedName>
        <fullName>Protein C-mannosyl-transferase DPY19L3</fullName>
        <ecNumber evidence="3">2.4.1.-</ecNumber>
    </recommendedName>
    <alternativeName>
        <fullName>Dpy-19-like protein 3</fullName>
    </alternativeName>
    <alternativeName>
        <fullName>Protein dpy-19 homolog 3</fullName>
    </alternativeName>
</protein>
<evidence type="ECO:0000250" key="1">
    <source>
        <dbReference type="UniProtKB" id="Q6ZPD9"/>
    </source>
</evidence>
<evidence type="ECO:0000255" key="2"/>
<evidence type="ECO:0000269" key="3">
    <source>
    </source>
</evidence>
<evidence type="ECO:0000305" key="4"/>
<evidence type="ECO:0000305" key="5">
    <source>
    </source>
</evidence>
<feature type="chain" id="PRO_0000311902" description="Protein C-mannosyl-transferase DPY19L3">
    <location>
        <begin position="1"/>
        <end position="716"/>
    </location>
</feature>
<feature type="topological domain" description="Cytoplasmic" evidence="1">
    <location>
        <begin position="1"/>
        <end position="43"/>
    </location>
</feature>
<feature type="transmembrane region" description="Helical; Name=1" evidence="2">
    <location>
        <begin position="44"/>
        <end position="64"/>
    </location>
</feature>
<feature type="topological domain" description="Lumenal" evidence="1">
    <location>
        <begin position="65"/>
        <end position="154"/>
    </location>
</feature>
<feature type="transmembrane region" description="Helical; Name=2" evidence="2">
    <location>
        <begin position="155"/>
        <end position="182"/>
    </location>
</feature>
<feature type="topological domain" description="Cytoplasmic" evidence="1">
    <location>
        <begin position="183"/>
        <end position="184"/>
    </location>
</feature>
<feature type="intramembrane region" description="Name=3" evidence="1">
    <location>
        <begin position="185"/>
        <end position="197"/>
    </location>
</feature>
<feature type="topological domain" description="Cytoplasmic" evidence="1">
    <location>
        <begin position="198"/>
        <end position="215"/>
    </location>
</feature>
<feature type="intramembrane region" description="Name=4" evidence="1">
    <location>
        <begin position="216"/>
        <end position="230"/>
    </location>
</feature>
<feature type="topological domain" description="Cytoplasmic" evidence="1">
    <location>
        <begin position="231"/>
        <end position="239"/>
    </location>
</feature>
<feature type="transmembrane region" description="Helical; Name=5" evidence="1">
    <location>
        <begin position="240"/>
        <end position="256"/>
    </location>
</feature>
<feature type="topological domain" description="Lumenal" evidence="1">
    <location>
        <begin position="257"/>
        <end position="262"/>
    </location>
</feature>
<feature type="transmembrane region" description="Helical; Name=6" evidence="1">
    <location>
        <begin position="263"/>
        <end position="279"/>
    </location>
</feature>
<feature type="topological domain" description="Cytoplasmic" evidence="1">
    <location>
        <begin position="280"/>
        <end position="289"/>
    </location>
</feature>
<feature type="transmembrane region" description="Helical; Name=7" evidence="1">
    <location>
        <begin position="290"/>
        <end position="306"/>
    </location>
</feature>
<feature type="topological domain" description="Lumenal" evidence="1">
    <location>
        <begin position="307"/>
        <end position="308"/>
    </location>
</feature>
<feature type="transmembrane region" description="Helical; Name=8" evidence="1">
    <location>
        <begin position="309"/>
        <end position="323"/>
    </location>
</feature>
<feature type="topological domain" description="Cytoplasmic" evidence="1">
    <location>
        <begin position="324"/>
        <end position="338"/>
    </location>
</feature>
<feature type="transmembrane region" description="Helical; Name=9" evidence="1">
    <location>
        <begin position="339"/>
        <end position="359"/>
    </location>
</feature>
<feature type="topological domain" description="Lumenal" evidence="1">
    <location>
        <begin position="360"/>
        <end position="414"/>
    </location>
</feature>
<feature type="transmembrane region" description="Helical; Name=10" evidence="1">
    <location>
        <begin position="415"/>
        <end position="437"/>
    </location>
</feature>
<feature type="topological domain" description="Cytoplasmic" evidence="1">
    <location>
        <begin position="438"/>
        <end position="465"/>
    </location>
</feature>
<feature type="transmembrane region" description="Helical; Name=11" evidence="1">
    <location>
        <begin position="466"/>
        <end position="485"/>
    </location>
</feature>
<feature type="topological domain" description="Lumenal" evidence="1">
    <location>
        <begin position="486"/>
        <end position="487"/>
    </location>
</feature>
<feature type="transmembrane region" description="Helical; Name=12" evidence="1">
    <location>
        <begin position="488"/>
        <end position="499"/>
    </location>
</feature>
<feature type="topological domain" description="Cytoplasmic" evidence="1">
    <location>
        <begin position="500"/>
        <end position="522"/>
    </location>
</feature>
<feature type="transmembrane region" description="Helical; Name=13" evidence="1">
    <location>
        <begin position="523"/>
        <end position="539"/>
    </location>
</feature>
<feature type="topological domain" description="Lumenal" evidence="1">
    <location>
        <begin position="540"/>
        <end position="716"/>
    </location>
</feature>
<feature type="glycosylation site" description="N-linked (GlcNAc...) asparagine" evidence="1">
    <location>
        <position position="118"/>
    </location>
</feature>
<feature type="glycosylation site" description="N-linked (GlcNAc...) asparagine" evidence="1">
    <location>
        <position position="704"/>
    </location>
</feature>
<feature type="sequence conflict" description="In Ref. 3; AAH50065." evidence="4" ref="3">
    <original>T</original>
    <variation>A</variation>
    <location>
        <position position="208"/>
    </location>
</feature>
<feature type="sequence conflict" description="In Ref. 2; BAC28266." evidence="4" ref="2">
    <original>P</original>
    <variation>T</variation>
    <location>
        <position position="210"/>
    </location>
</feature>
<feature type="sequence conflict" description="In Ref. 1; AAQ10888." evidence="4" ref="1">
    <original>FG</original>
    <variation>LV</variation>
    <location>
        <begin position="382"/>
        <end position="383"/>
    </location>
</feature>
<feature type="sequence conflict" description="In Ref. 2; BAC28636." evidence="4" ref="2">
    <original>S</original>
    <variation>P</variation>
    <location>
        <position position="539"/>
    </location>
</feature>
<feature type="sequence conflict" description="In Ref. 3; AAH50065." evidence="4" ref="3">
    <original>G</original>
    <variation>R</variation>
    <location>
        <position position="590"/>
    </location>
</feature>
<feature type="sequence conflict" description="In Ref. 3; AAH50065." evidence="4" ref="3">
    <original>G</original>
    <variation>S</variation>
    <location>
        <position position="650"/>
    </location>
</feature>
<accession>Q71B07</accession>
<accession>Q6PB46</accession>
<accession>Q80W29</accession>
<accession>Q8BLA9</accession>
<accession>Q8BZL3</accession>
<accession>Q8BZW5</accession>
<name>D19L3_MOUSE</name>
<comment type="function">
    <text evidence="1 3">C-mannosyltransferase that mediates C-mannosylation of tryptophan residues on target proteins. The reaction occurs on the luminal side of the endoplasmic reticulum and involves the transfer of a mannose unit from a dolichylphosphate mannose (Dol-P-Man) donor to an acceptor protein containing a WxxW or WxxC consensus sequence (PubMed:28202721). C-mannosylates RSPO1, a Wnt signaling regulator, preferentially at the first Trp residue in the sequence WxxW (By similarity). C-mannosylates the netrin receptor UNC5A, preferentially at the third tryptophan of WxxWxxWxxC sequence (PubMed:28202721).</text>
</comment>
<comment type="catalytic activity">
    <reaction evidence="3">
        <text>L-tryptophyl-[protein] + a di-trans,poly-cis-dolichyl beta-D-mannosyl phosphate = C-alpha-D-mannosyl-L-tryptophyl-[protein] + a di-trans,poly-cis-dolichyl phosphate + H(+)</text>
        <dbReference type="Rhea" id="RHEA:77219"/>
        <dbReference type="Rhea" id="RHEA-COMP:15365"/>
        <dbReference type="Rhea" id="RHEA-COMP:18864"/>
        <dbReference type="Rhea" id="RHEA-COMP:19498"/>
        <dbReference type="Rhea" id="RHEA-COMP:19501"/>
        <dbReference type="ChEBI" id="CHEBI:15378"/>
        <dbReference type="ChEBI" id="CHEBI:29954"/>
        <dbReference type="ChEBI" id="CHEBI:57683"/>
        <dbReference type="ChEBI" id="CHEBI:58211"/>
        <dbReference type="ChEBI" id="CHEBI:195646"/>
    </reaction>
    <physiologicalReaction direction="left-to-right" evidence="5">
        <dbReference type="Rhea" id="RHEA:77220"/>
    </physiologicalReaction>
</comment>
<comment type="pathway">
    <text evidence="3">Protein modification; protein glycosylation.</text>
</comment>
<comment type="subcellular location">
    <subcellularLocation>
        <location evidence="3">Endoplasmic reticulum membrane</location>
        <topology evidence="1">Multi-pass membrane protein</topology>
    </subcellularLocation>
</comment>
<comment type="domain">
    <text evidence="1">The C-terminal luminal region is essential for C-mannosyltransferase activity.</text>
</comment>
<comment type="similarity">
    <text evidence="4">Belongs to the dpy-19 family.</text>
</comment>
<comment type="sequence caution" evidence="4">
    <conflict type="frameshift">
        <sequence resource="EMBL-CDS" id="AAH59897"/>
    </conflict>
</comment>
<organism>
    <name type="scientific">Mus musculus</name>
    <name type="common">Mouse</name>
    <dbReference type="NCBI Taxonomy" id="10090"/>
    <lineage>
        <taxon>Eukaryota</taxon>
        <taxon>Metazoa</taxon>
        <taxon>Chordata</taxon>
        <taxon>Craniata</taxon>
        <taxon>Vertebrata</taxon>
        <taxon>Euteleostomi</taxon>
        <taxon>Mammalia</taxon>
        <taxon>Eutheria</taxon>
        <taxon>Euarchontoglires</taxon>
        <taxon>Glires</taxon>
        <taxon>Rodentia</taxon>
        <taxon>Myomorpha</taxon>
        <taxon>Muroidea</taxon>
        <taxon>Muridae</taxon>
        <taxon>Murinae</taxon>
        <taxon>Mus</taxon>
        <taxon>Mus</taxon>
    </lineage>
</organism>
<dbReference type="EC" id="2.4.1.-" evidence="3"/>
<dbReference type="EMBL" id="AF538322">
    <property type="protein sequence ID" value="AAQ10888.1"/>
    <property type="molecule type" value="mRNA"/>
</dbReference>
<dbReference type="EMBL" id="AK033395">
    <property type="protein sequence ID" value="BAC28266.1"/>
    <property type="molecule type" value="mRNA"/>
</dbReference>
<dbReference type="EMBL" id="AK034217">
    <property type="protein sequence ID" value="BAC28636.1"/>
    <property type="molecule type" value="mRNA"/>
</dbReference>
<dbReference type="EMBL" id="AK045758">
    <property type="protein sequence ID" value="BAC32483.1"/>
    <property type="molecule type" value="mRNA"/>
</dbReference>
<dbReference type="EMBL" id="BC050065">
    <property type="protein sequence ID" value="AAH50065.1"/>
    <property type="molecule type" value="mRNA"/>
</dbReference>
<dbReference type="EMBL" id="BC059897">
    <property type="protein sequence ID" value="AAH59897.1"/>
    <property type="status" value="ALT_FRAME"/>
    <property type="molecule type" value="mRNA"/>
</dbReference>
<dbReference type="CCDS" id="CCDS21155.1"/>
<dbReference type="RefSeq" id="NP_848819.2">
    <property type="nucleotide sequence ID" value="NM_178704.3"/>
</dbReference>
<dbReference type="SMR" id="Q71B07"/>
<dbReference type="BioGRID" id="231376">
    <property type="interactions" value="1"/>
</dbReference>
<dbReference type="FunCoup" id="Q71B07">
    <property type="interactions" value="1564"/>
</dbReference>
<dbReference type="STRING" id="10090.ENSMUSP00000054747"/>
<dbReference type="GlyGen" id="Q71B07">
    <property type="glycosylation" value="2 sites, 1 N-linked glycan (1 site)"/>
</dbReference>
<dbReference type="iPTMnet" id="Q71B07"/>
<dbReference type="PhosphoSitePlus" id="Q71B07"/>
<dbReference type="SwissPalm" id="Q71B07"/>
<dbReference type="PaxDb" id="10090-ENSMUSP00000054747"/>
<dbReference type="PeptideAtlas" id="Q71B07"/>
<dbReference type="ProteomicsDB" id="279357"/>
<dbReference type="Pumba" id="Q71B07"/>
<dbReference type="Antibodypedia" id="2035">
    <property type="antibodies" value="93 antibodies from 14 providers"/>
</dbReference>
<dbReference type="DNASU" id="233115"/>
<dbReference type="Ensembl" id="ENSMUST00000051377.15">
    <property type="protein sequence ID" value="ENSMUSP00000054747.9"/>
    <property type="gene ID" value="ENSMUSG00000043671.15"/>
</dbReference>
<dbReference type="GeneID" id="233115"/>
<dbReference type="KEGG" id="mmu:233115"/>
<dbReference type="UCSC" id="uc009gkg.2">
    <property type="organism name" value="mouse"/>
</dbReference>
<dbReference type="AGR" id="MGI:2443952"/>
<dbReference type="CTD" id="147991"/>
<dbReference type="MGI" id="MGI:2443952">
    <property type="gene designation" value="Dpy19l3"/>
</dbReference>
<dbReference type="VEuPathDB" id="HostDB:ENSMUSG00000043671"/>
<dbReference type="eggNOG" id="KOG4587">
    <property type="taxonomic scope" value="Eukaryota"/>
</dbReference>
<dbReference type="GeneTree" id="ENSGT00530000063023"/>
<dbReference type="HOGENOM" id="CLU_014404_1_0_1"/>
<dbReference type="InParanoid" id="Q71B07"/>
<dbReference type="OMA" id="HPHYENK"/>
<dbReference type="OrthoDB" id="6019623at2759"/>
<dbReference type="PhylomeDB" id="Q71B07"/>
<dbReference type="TreeFam" id="TF313376"/>
<dbReference type="BRENDA" id="2.4.1.B72">
    <property type="organism ID" value="3474"/>
</dbReference>
<dbReference type="UniPathway" id="UPA00378"/>
<dbReference type="BioGRID-ORCS" id="233115">
    <property type="hits" value="2 hits in 77 CRISPR screens"/>
</dbReference>
<dbReference type="ChiTaRS" id="Dpy19l3">
    <property type="organism name" value="mouse"/>
</dbReference>
<dbReference type="PRO" id="PR:Q71B07"/>
<dbReference type="Proteomes" id="UP000000589">
    <property type="component" value="Chromosome 7"/>
</dbReference>
<dbReference type="RNAct" id="Q71B07">
    <property type="molecule type" value="protein"/>
</dbReference>
<dbReference type="Bgee" id="ENSMUSG00000043671">
    <property type="expression patterns" value="Expressed in embryonic post-anal tail and 211 other cell types or tissues"/>
</dbReference>
<dbReference type="ExpressionAtlas" id="Q71B07">
    <property type="expression patterns" value="baseline and differential"/>
</dbReference>
<dbReference type="GO" id="GO:0005789">
    <property type="term" value="C:endoplasmic reticulum membrane"/>
    <property type="evidence" value="ECO:0000314"/>
    <property type="project" value="UniProtKB"/>
</dbReference>
<dbReference type="GO" id="GO:0000030">
    <property type="term" value="F:mannosyltransferase activity"/>
    <property type="evidence" value="ECO:0000314"/>
    <property type="project" value="UniProtKB"/>
</dbReference>
<dbReference type="GO" id="GO:0006486">
    <property type="term" value="P:protein glycosylation"/>
    <property type="evidence" value="ECO:0007669"/>
    <property type="project" value="UniProtKB-UniPathway"/>
</dbReference>
<dbReference type="CDD" id="cd20181">
    <property type="entry name" value="Dpy19L3"/>
    <property type="match status" value="1"/>
</dbReference>
<dbReference type="InterPro" id="IPR018732">
    <property type="entry name" value="Dpy-19/Dpy-19-like"/>
</dbReference>
<dbReference type="InterPro" id="IPR047465">
    <property type="entry name" value="Dpy19L3"/>
</dbReference>
<dbReference type="PANTHER" id="PTHR31488:SF4">
    <property type="entry name" value="C-MANNOSYLTRANSFERASE DPY19L3-RELATED"/>
    <property type="match status" value="1"/>
</dbReference>
<dbReference type="PANTHER" id="PTHR31488">
    <property type="entry name" value="DPY-19-LIKE 1, LIKE (H. SAPIENS)"/>
    <property type="match status" value="1"/>
</dbReference>
<dbReference type="Pfam" id="PF10034">
    <property type="entry name" value="Dpy19"/>
    <property type="match status" value="1"/>
</dbReference>
<proteinExistence type="evidence at protein level"/>